<gene>
    <name evidence="1" type="primary">hemH</name>
    <name type="ordered locus">SSON_0462</name>
</gene>
<sequence>MRQTKIGILLANLGTPDAPTPEAVKRYLKQFLSDRRVVDTSRLLWWPLLRGVILPLRSPRVAKLYASVWMEGGSPLMVYSRQQQQALAQRLPETPVALGMSYGSPSLESAVDELLAEHVDHIVVLPLYPQFSCSTVGAVWDELARILARKRSIPGISFIRDYADNHDYINALANSVRASFAKHGEPDLLLLSYHGIPQRYADEGDDYPQRCRTTTRELASALGMAPEKVMMTFQSRFGREPWLMPYTDETLKMLGEKGVGHIQVMCPGFAADCLETLEEIAEQNREVFLGAGGKKYEYIPALNATPEHIEMMANLVAAYR</sequence>
<keyword id="KW-0963">Cytoplasm</keyword>
<keyword id="KW-0350">Heme biosynthesis</keyword>
<keyword id="KW-0408">Iron</keyword>
<keyword id="KW-0456">Lyase</keyword>
<keyword id="KW-0479">Metal-binding</keyword>
<keyword id="KW-0627">Porphyrin biosynthesis</keyword>
<keyword id="KW-1185">Reference proteome</keyword>
<protein>
    <recommendedName>
        <fullName evidence="1">Ferrochelatase</fullName>
        <ecNumber evidence="1">4.98.1.1</ecNumber>
    </recommendedName>
    <alternativeName>
        <fullName evidence="1">Heme synthase</fullName>
    </alternativeName>
    <alternativeName>
        <fullName evidence="1">Protoheme ferro-lyase</fullName>
    </alternativeName>
</protein>
<accession>Q3Z4S4</accession>
<organism>
    <name type="scientific">Shigella sonnei (strain Ss046)</name>
    <dbReference type="NCBI Taxonomy" id="300269"/>
    <lineage>
        <taxon>Bacteria</taxon>
        <taxon>Pseudomonadati</taxon>
        <taxon>Pseudomonadota</taxon>
        <taxon>Gammaproteobacteria</taxon>
        <taxon>Enterobacterales</taxon>
        <taxon>Enterobacteriaceae</taxon>
        <taxon>Shigella</taxon>
    </lineage>
</organism>
<dbReference type="EC" id="4.98.1.1" evidence="1"/>
<dbReference type="EMBL" id="CP000038">
    <property type="protein sequence ID" value="AAZ87238.1"/>
    <property type="molecule type" value="Genomic_DNA"/>
</dbReference>
<dbReference type="RefSeq" id="WP_001250065.1">
    <property type="nucleotide sequence ID" value="NC_007384.1"/>
</dbReference>
<dbReference type="SMR" id="Q3Z4S4"/>
<dbReference type="KEGG" id="ssn:SSON_0462"/>
<dbReference type="HOGENOM" id="CLU_018884_0_0_6"/>
<dbReference type="UniPathway" id="UPA00252">
    <property type="reaction ID" value="UER00325"/>
</dbReference>
<dbReference type="Proteomes" id="UP000002529">
    <property type="component" value="Chromosome"/>
</dbReference>
<dbReference type="GO" id="GO:0005737">
    <property type="term" value="C:cytoplasm"/>
    <property type="evidence" value="ECO:0007669"/>
    <property type="project" value="UniProtKB-SubCell"/>
</dbReference>
<dbReference type="GO" id="GO:0004325">
    <property type="term" value="F:ferrochelatase activity"/>
    <property type="evidence" value="ECO:0007669"/>
    <property type="project" value="UniProtKB-UniRule"/>
</dbReference>
<dbReference type="GO" id="GO:0046872">
    <property type="term" value="F:metal ion binding"/>
    <property type="evidence" value="ECO:0007669"/>
    <property type="project" value="UniProtKB-KW"/>
</dbReference>
<dbReference type="GO" id="GO:0006783">
    <property type="term" value="P:heme biosynthetic process"/>
    <property type="evidence" value="ECO:0007669"/>
    <property type="project" value="UniProtKB-UniRule"/>
</dbReference>
<dbReference type="CDD" id="cd00419">
    <property type="entry name" value="Ferrochelatase_C"/>
    <property type="match status" value="1"/>
</dbReference>
<dbReference type="CDD" id="cd03411">
    <property type="entry name" value="Ferrochelatase_N"/>
    <property type="match status" value="1"/>
</dbReference>
<dbReference type="FunFam" id="3.40.50.1400:FF:000004">
    <property type="entry name" value="Ferrochelatase"/>
    <property type="match status" value="1"/>
</dbReference>
<dbReference type="Gene3D" id="3.40.50.1400">
    <property type="match status" value="2"/>
</dbReference>
<dbReference type="HAMAP" id="MF_00323">
    <property type="entry name" value="Ferrochelatase"/>
    <property type="match status" value="1"/>
</dbReference>
<dbReference type="InterPro" id="IPR001015">
    <property type="entry name" value="Ferrochelatase"/>
</dbReference>
<dbReference type="InterPro" id="IPR019772">
    <property type="entry name" value="Ferrochelatase_AS"/>
</dbReference>
<dbReference type="InterPro" id="IPR033644">
    <property type="entry name" value="Ferrochelatase_C"/>
</dbReference>
<dbReference type="InterPro" id="IPR033659">
    <property type="entry name" value="Ferrochelatase_N"/>
</dbReference>
<dbReference type="NCBIfam" id="TIGR00109">
    <property type="entry name" value="hemH"/>
    <property type="match status" value="1"/>
</dbReference>
<dbReference type="PANTHER" id="PTHR11108">
    <property type="entry name" value="FERROCHELATASE"/>
    <property type="match status" value="1"/>
</dbReference>
<dbReference type="PANTHER" id="PTHR11108:SF1">
    <property type="entry name" value="FERROCHELATASE, MITOCHONDRIAL"/>
    <property type="match status" value="1"/>
</dbReference>
<dbReference type="Pfam" id="PF00762">
    <property type="entry name" value="Ferrochelatase"/>
    <property type="match status" value="1"/>
</dbReference>
<dbReference type="SUPFAM" id="SSF53800">
    <property type="entry name" value="Chelatase"/>
    <property type="match status" value="1"/>
</dbReference>
<dbReference type="PROSITE" id="PS00534">
    <property type="entry name" value="FERROCHELATASE"/>
    <property type="match status" value="1"/>
</dbReference>
<feature type="chain" id="PRO_1000019371" description="Ferrochelatase">
    <location>
        <begin position="1"/>
        <end position="320"/>
    </location>
</feature>
<feature type="binding site" evidence="1">
    <location>
        <position position="194"/>
    </location>
    <ligand>
        <name>Fe cation</name>
        <dbReference type="ChEBI" id="CHEBI:24875"/>
    </ligand>
</feature>
<feature type="binding site" evidence="1">
    <location>
        <position position="275"/>
    </location>
    <ligand>
        <name>Fe cation</name>
        <dbReference type="ChEBI" id="CHEBI:24875"/>
    </ligand>
</feature>
<name>HEMH_SHISS</name>
<reference key="1">
    <citation type="journal article" date="2005" name="Nucleic Acids Res.">
        <title>Genome dynamics and diversity of Shigella species, the etiologic agents of bacillary dysentery.</title>
        <authorList>
            <person name="Yang F."/>
            <person name="Yang J."/>
            <person name="Zhang X."/>
            <person name="Chen L."/>
            <person name="Jiang Y."/>
            <person name="Yan Y."/>
            <person name="Tang X."/>
            <person name="Wang J."/>
            <person name="Xiong Z."/>
            <person name="Dong J."/>
            <person name="Xue Y."/>
            <person name="Zhu Y."/>
            <person name="Xu X."/>
            <person name="Sun L."/>
            <person name="Chen S."/>
            <person name="Nie H."/>
            <person name="Peng J."/>
            <person name="Xu J."/>
            <person name="Wang Y."/>
            <person name="Yuan Z."/>
            <person name="Wen Y."/>
            <person name="Yao Z."/>
            <person name="Shen Y."/>
            <person name="Qiang B."/>
            <person name="Hou Y."/>
            <person name="Yu J."/>
            <person name="Jin Q."/>
        </authorList>
    </citation>
    <scope>NUCLEOTIDE SEQUENCE [LARGE SCALE GENOMIC DNA]</scope>
    <source>
        <strain>Ss046</strain>
    </source>
</reference>
<comment type="function">
    <text evidence="1">Catalyzes the ferrous insertion into protoporphyrin IX.</text>
</comment>
<comment type="catalytic activity">
    <reaction evidence="1">
        <text>heme b + 2 H(+) = protoporphyrin IX + Fe(2+)</text>
        <dbReference type="Rhea" id="RHEA:22584"/>
        <dbReference type="ChEBI" id="CHEBI:15378"/>
        <dbReference type="ChEBI" id="CHEBI:29033"/>
        <dbReference type="ChEBI" id="CHEBI:57306"/>
        <dbReference type="ChEBI" id="CHEBI:60344"/>
        <dbReference type="EC" id="4.98.1.1"/>
    </reaction>
</comment>
<comment type="pathway">
    <text evidence="1">Porphyrin-containing compound metabolism; protoheme biosynthesis; protoheme from protoporphyrin-IX: step 1/1.</text>
</comment>
<comment type="subunit">
    <text evidence="1">Monomer.</text>
</comment>
<comment type="subcellular location">
    <subcellularLocation>
        <location evidence="1">Cytoplasm</location>
    </subcellularLocation>
</comment>
<comment type="similarity">
    <text evidence="1">Belongs to the ferrochelatase family.</text>
</comment>
<evidence type="ECO:0000255" key="1">
    <source>
        <dbReference type="HAMAP-Rule" id="MF_00323"/>
    </source>
</evidence>
<proteinExistence type="inferred from homology"/>